<keyword id="KW-0274">FAD</keyword>
<keyword id="KW-0285">Flavoprotein</keyword>
<keyword id="KW-0325">Glycoprotein</keyword>
<keyword id="KW-0472">Membrane</keyword>
<keyword id="KW-0496">Mitochondrion</keyword>
<keyword id="KW-1000">Mitochondrion outer membrane</keyword>
<keyword id="KW-0503">Monooxygenase</keyword>
<keyword id="KW-0521">NADP</keyword>
<keyword id="KW-0560">Oxidoreductase</keyword>
<keyword id="KW-0662">Pyridine nucleotide biosynthesis</keyword>
<keyword id="KW-1185">Reference proteome</keyword>
<keyword id="KW-0812">Transmembrane</keyword>
<keyword id="KW-1133">Transmembrane helix</keyword>
<name>ACDD_ASPCN</name>
<reference key="1">
    <citation type="submission" date="2017-12" db="EMBL/GenBank/DDBJ databases">
        <authorList>
            <consortium name="DOE Joint Genome Institute"/>
            <person name="Haridas S."/>
            <person name="Kjaerbolling I."/>
            <person name="Vesth T.C."/>
            <person name="Frisvad J.C."/>
            <person name="Nybo J.L."/>
            <person name="Theobald S."/>
            <person name="Kuo A."/>
            <person name="Bowyer P."/>
            <person name="Matsuda Y."/>
            <person name="Mondo S."/>
            <person name="Lyhne E.K."/>
            <person name="Kogle M.E."/>
            <person name="Clum A."/>
            <person name="Lipzen A."/>
            <person name="Salamov A."/>
            <person name="Ngan C.Y."/>
            <person name="Daum C."/>
            <person name="Chiniquy J."/>
            <person name="Barry K."/>
            <person name="LaButti K."/>
            <person name="Simmons B.A."/>
            <person name="Magnuson J.K."/>
            <person name="Mortensen U.H."/>
            <person name="Larsen T.O."/>
            <person name="Grigoriev I.V."/>
            <person name="Baker S.E."/>
            <person name="Andersen M.R."/>
            <person name="Nordberg H.P."/>
            <person name="Cantor M.N."/>
            <person name="Hua S.X."/>
        </authorList>
    </citation>
    <scope>NUCLEOTIDE SEQUENCE [LARGE SCALE GENOMIC DNA]</scope>
    <source>
        <strain>CBS 102.13</strain>
    </source>
</reference>
<reference key="2">
    <citation type="journal article" date="2022" name="Org. Lett.">
        <title>Aspcandine: A Pyrrolobenzazepine Alkaloid Synthesized by a Fungal Nonribosomal Peptide Synthetase-Polyketide Synthase Hybrid.</title>
        <authorList>
            <person name="Chen L."/>
            <person name="Tang J.W."/>
            <person name="Liu Y.Y."/>
            <person name="Matsuda Y."/>
        </authorList>
    </citation>
    <scope>FUNCTION</scope>
    <scope>CATALYTIC ACTIVITY</scope>
    <scope>PATHWAY</scope>
</reference>
<evidence type="ECO:0000250" key="1">
    <source>
        <dbReference type="UniProtKB" id="P38169"/>
    </source>
</evidence>
<evidence type="ECO:0000250" key="2">
    <source>
        <dbReference type="UniProtKB" id="Q84HF5"/>
    </source>
</evidence>
<evidence type="ECO:0000255" key="3"/>
<evidence type="ECO:0000255" key="4">
    <source>
        <dbReference type="HAMAP-Rule" id="MF_03018"/>
    </source>
</evidence>
<evidence type="ECO:0000255" key="5">
    <source>
        <dbReference type="PROSITE-ProRule" id="PRU00498"/>
    </source>
</evidence>
<evidence type="ECO:0000269" key="6">
    <source>
    </source>
</evidence>
<evidence type="ECO:0000303" key="7">
    <source>
    </source>
</evidence>
<protein>
    <recommendedName>
        <fullName evidence="4">Kynurenine 3-monooxygenase acdD</fullName>
        <ecNumber evidence="4">1.14.13.9</ecNumber>
    </recommendedName>
    <alternativeName>
        <fullName evidence="7">Aspcandine biosynthesis gene cluster protein D</fullName>
    </alternativeName>
    <alternativeName>
        <fullName evidence="4">Kynurenine 3-hydroxylase acdD</fullName>
    </alternativeName>
</protein>
<feature type="chain" id="PRO_0000456694" description="Kynurenine 3-monooxygenase acdD">
    <location>
        <begin position="1"/>
        <end position="500"/>
    </location>
</feature>
<feature type="transmembrane region" description="Helical" evidence="3">
    <location>
        <begin position="451"/>
        <end position="471"/>
    </location>
</feature>
<feature type="binding site" evidence="1">
    <location>
        <position position="17"/>
    </location>
    <ligand>
        <name>FAD</name>
        <dbReference type="ChEBI" id="CHEBI:57692"/>
    </ligand>
</feature>
<feature type="binding site" evidence="1">
    <location>
        <begin position="36"/>
        <end position="38"/>
    </location>
    <ligand>
        <name>FAD</name>
        <dbReference type="ChEBI" id="CHEBI:57692"/>
    </ligand>
</feature>
<feature type="binding site" evidence="1">
    <location>
        <position position="58"/>
    </location>
    <ligand>
        <name>FAD</name>
        <dbReference type="ChEBI" id="CHEBI:57692"/>
    </ligand>
</feature>
<feature type="binding site" evidence="2">
    <location>
        <position position="89"/>
    </location>
    <ligand>
        <name>L-kynurenine</name>
        <dbReference type="ChEBI" id="CHEBI:57959"/>
    </ligand>
</feature>
<feature type="binding site" evidence="2">
    <location>
        <position position="106"/>
    </location>
    <ligand>
        <name>L-kynurenine</name>
        <dbReference type="ChEBI" id="CHEBI:57959"/>
    </ligand>
</feature>
<feature type="binding site" evidence="1">
    <location>
        <position position="118"/>
    </location>
    <ligand>
        <name>FAD</name>
        <dbReference type="ChEBI" id="CHEBI:57692"/>
    </ligand>
</feature>
<feature type="binding site" evidence="1">
    <location>
        <position position="143"/>
    </location>
    <ligand>
        <name>FAD</name>
        <dbReference type="ChEBI" id="CHEBI:57692"/>
    </ligand>
</feature>
<feature type="binding site" evidence="1">
    <location>
        <position position="321"/>
    </location>
    <ligand>
        <name>FAD</name>
        <dbReference type="ChEBI" id="CHEBI:57692"/>
    </ligand>
</feature>
<feature type="binding site" evidence="1">
    <location>
        <begin position="332"/>
        <end position="335"/>
    </location>
    <ligand>
        <name>FAD</name>
        <dbReference type="ChEBI" id="CHEBI:57692"/>
    </ligand>
</feature>
<feature type="binding site" evidence="2">
    <location>
        <position position="392"/>
    </location>
    <ligand>
        <name>L-kynurenine</name>
        <dbReference type="ChEBI" id="CHEBI:57959"/>
    </ligand>
</feature>
<feature type="binding site" evidence="2">
    <location>
        <position position="428"/>
    </location>
    <ligand>
        <name>L-kynurenine</name>
        <dbReference type="ChEBI" id="CHEBI:57959"/>
    </ligand>
</feature>
<feature type="glycosylation site" description="N-linked (GlcNAc...) asparagine" evidence="5">
    <location>
        <position position="50"/>
    </location>
</feature>
<feature type="glycosylation site" description="N-linked (GlcNAc...) asparagine" evidence="5">
    <location>
        <position position="163"/>
    </location>
</feature>
<comment type="function">
    <text evidence="6">Indoleamine 2,3-dioxygenase; part of the gene cluster that mediates the biosynthesis of aspcandine, a pyrrolobenzazepine alkaloid (PubMed:35748771). Initially, the indoleamine 2,3-dioxygenase acdA accepts L-tryptophan and performs the oxidative opening of the indole ring to yield N'-formyl-L-kynurenine, which undergoes the spontaneous deformylation reaction to provide L-kynurenine (PubMed:35748771). The kynurenine 3-monooxygenase acdD then hydroxylates L-kynurenine to afford 3-hydroxy-L-kynurenine (PubMed:35748771). 3-hydroxy-L-kynurenine is activated by the A domain of the NRPS-PKS acdB and subsequently loaded onto the enzyme (PubMed:35748771). The KS domain conducts the decarboxylative condensation of the 3-hydroxy-L-kynurenyl and malonyl moieties, and subsequent nucleophilic attacks by the two amino groups would occur nonenzymatically at two distinct positions, achieving the chain release and the construction of the tricyclic system (PubMed:35748771). Finally, the dehydration reaction completes the biosynthesis to yield aspcandine (PubMed:35748771).</text>
</comment>
<comment type="catalytic activity">
    <reaction evidence="4 6">
        <text>L-kynurenine + NADPH + O2 + H(+) = 3-hydroxy-L-kynurenine + NADP(+) + H2O</text>
        <dbReference type="Rhea" id="RHEA:20545"/>
        <dbReference type="ChEBI" id="CHEBI:15377"/>
        <dbReference type="ChEBI" id="CHEBI:15378"/>
        <dbReference type="ChEBI" id="CHEBI:15379"/>
        <dbReference type="ChEBI" id="CHEBI:57783"/>
        <dbReference type="ChEBI" id="CHEBI:57959"/>
        <dbReference type="ChEBI" id="CHEBI:58125"/>
        <dbReference type="ChEBI" id="CHEBI:58349"/>
        <dbReference type="EC" id="1.14.13.9"/>
    </reaction>
</comment>
<comment type="cofactor">
    <cofactor evidence="4">
        <name>FAD</name>
        <dbReference type="ChEBI" id="CHEBI:57692"/>
    </cofactor>
</comment>
<comment type="pathway">
    <text evidence="6">Secondary metabolite biosynthesis.</text>
</comment>
<comment type="pathway">
    <text evidence="4">Cofactor biosynthesis; NAD(+) biosynthesis; quinolinate from L-kynurenine: step 1/3.</text>
</comment>
<comment type="subcellular location">
    <subcellularLocation>
        <location evidence="4">Mitochondrion outer membrane</location>
    </subcellularLocation>
</comment>
<comment type="similarity">
    <text evidence="4">Belongs to the aromatic-ring hydroxylase family. KMO subfamily.</text>
</comment>
<organism>
    <name type="scientific">Aspergillus candidus</name>
    <dbReference type="NCBI Taxonomy" id="41067"/>
    <lineage>
        <taxon>Eukaryota</taxon>
        <taxon>Fungi</taxon>
        <taxon>Dikarya</taxon>
        <taxon>Ascomycota</taxon>
        <taxon>Pezizomycotina</taxon>
        <taxon>Eurotiomycetes</taxon>
        <taxon>Eurotiomycetidae</taxon>
        <taxon>Eurotiales</taxon>
        <taxon>Aspergillaceae</taxon>
        <taxon>Aspergillus</taxon>
        <taxon>Aspergillus subgen. Circumdati</taxon>
    </lineage>
</organism>
<sequence length="500" mass="56380">MAPSSNHKVVIVGAGPVGSLAALYAAARGDEVEVYELRGDLRDPSTIPLNFTKSINLALSERGINAMKHTRRDNMIQKILGEAIPVYGRMIHGRNDEKLWEASQAYDVHGRHINAADRCHLNNALLDELEQTPNVKLFFNHKLTGADFRAKKAWFEQRTPADNTSRAPEVEITFDYLVGADGAHSISRYHMMKYARVDYQQQYIDALWCEFHIPPTEEGEFRISPNHLHIWPGKEFMFIALPSADKSFTCTLFASTSYYTLLESSPESLLESFDKNFPGVCPDLITPADLQTQFETNPHLPLISIKCSPYHFGSSAVIVGDAAHAVVPFYGQGLNAGLEDIRVLFECLDQHGVYDLNASPESRALSRQAALQAYTDQRTKDAHAINDLSKDNYIEMRWGVQLPLYKLRKSLEETLDRYMPSLGWQTQYVRVSFSTQPYSEVIKAVERQGTLLLYGSISAIISSAAIVGVLAWNYPMRVSLLSMLQSPIQQLWSVWRNYHC</sequence>
<accession>A0A2I2F284</accession>
<gene>
    <name evidence="7" type="primary">acdD</name>
    <name type="ORF">BDW47DRAFT_120076</name>
</gene>
<proteinExistence type="evidence at protein level"/>
<dbReference type="EC" id="1.14.13.9" evidence="4"/>
<dbReference type="EMBL" id="KZ559173">
    <property type="protein sequence ID" value="PLB34718.1"/>
    <property type="molecule type" value="Genomic_DNA"/>
</dbReference>
<dbReference type="SMR" id="A0A2I2F284"/>
<dbReference type="STRING" id="41067.A0A2I2F284"/>
<dbReference type="OrthoDB" id="10053569at2759"/>
<dbReference type="UniPathway" id="UPA00253">
    <property type="reaction ID" value="UER00328"/>
</dbReference>
<dbReference type="Proteomes" id="UP000234585">
    <property type="component" value="Unassembled WGS sequence"/>
</dbReference>
<dbReference type="GO" id="GO:0005741">
    <property type="term" value="C:mitochondrial outer membrane"/>
    <property type="evidence" value="ECO:0007669"/>
    <property type="project" value="UniProtKB-SubCell"/>
</dbReference>
<dbReference type="GO" id="GO:0071949">
    <property type="term" value="F:FAD binding"/>
    <property type="evidence" value="ECO:0007669"/>
    <property type="project" value="InterPro"/>
</dbReference>
<dbReference type="GO" id="GO:0004502">
    <property type="term" value="F:kynurenine 3-monooxygenase activity"/>
    <property type="evidence" value="ECO:0007669"/>
    <property type="project" value="UniProtKB-UniRule"/>
</dbReference>
<dbReference type="GO" id="GO:0034354">
    <property type="term" value="P:'de novo' NAD biosynthetic process from L-tryptophan"/>
    <property type="evidence" value="ECO:0007669"/>
    <property type="project" value="UniProtKB-UniRule"/>
</dbReference>
<dbReference type="GO" id="GO:0043420">
    <property type="term" value="P:anthranilate metabolic process"/>
    <property type="evidence" value="ECO:0007669"/>
    <property type="project" value="UniProtKB-UniRule"/>
</dbReference>
<dbReference type="GO" id="GO:0070189">
    <property type="term" value="P:kynurenine metabolic process"/>
    <property type="evidence" value="ECO:0007669"/>
    <property type="project" value="TreeGrafter"/>
</dbReference>
<dbReference type="GO" id="GO:0006569">
    <property type="term" value="P:L-tryptophan catabolic process"/>
    <property type="evidence" value="ECO:0007669"/>
    <property type="project" value="UniProtKB-UniRule"/>
</dbReference>
<dbReference type="GO" id="GO:0019805">
    <property type="term" value="P:quinolinate biosynthetic process"/>
    <property type="evidence" value="ECO:0007669"/>
    <property type="project" value="UniProtKB-UniRule"/>
</dbReference>
<dbReference type="FunFam" id="3.50.50.60:FF:000129">
    <property type="entry name" value="Kynurenine 3-monooxygenase"/>
    <property type="match status" value="1"/>
</dbReference>
<dbReference type="Gene3D" id="3.50.50.60">
    <property type="entry name" value="FAD/NAD(P)-binding domain"/>
    <property type="match status" value="1"/>
</dbReference>
<dbReference type="HAMAP" id="MF_01971">
    <property type="entry name" value="Kynurenine_monooxygenase"/>
    <property type="match status" value="1"/>
</dbReference>
<dbReference type="InterPro" id="IPR002938">
    <property type="entry name" value="FAD-bd"/>
</dbReference>
<dbReference type="InterPro" id="IPR036188">
    <property type="entry name" value="FAD/NAD-bd_sf"/>
</dbReference>
<dbReference type="InterPro" id="IPR027545">
    <property type="entry name" value="Kynurenine_monooxygenase"/>
</dbReference>
<dbReference type="PANTHER" id="PTHR46028">
    <property type="entry name" value="KYNURENINE 3-MONOOXYGENASE"/>
    <property type="match status" value="1"/>
</dbReference>
<dbReference type="PANTHER" id="PTHR46028:SF2">
    <property type="entry name" value="KYNURENINE 3-MONOOXYGENASE"/>
    <property type="match status" value="1"/>
</dbReference>
<dbReference type="Pfam" id="PF01494">
    <property type="entry name" value="FAD_binding_3"/>
    <property type="match status" value="1"/>
</dbReference>
<dbReference type="PRINTS" id="PR00420">
    <property type="entry name" value="RNGMNOXGNASE"/>
</dbReference>
<dbReference type="SUPFAM" id="SSF51905">
    <property type="entry name" value="FAD/NAD(P)-binding domain"/>
    <property type="match status" value="1"/>
</dbReference>